<dbReference type="EC" id="5.3.3.2" evidence="1"/>
<dbReference type="EMBL" id="BA000002">
    <property type="protein sequence ID" value="BAA80768.2"/>
    <property type="molecule type" value="Genomic_DNA"/>
</dbReference>
<dbReference type="PIR" id="C72560">
    <property type="entry name" value="C72560"/>
</dbReference>
<dbReference type="RefSeq" id="WP_010866581.1">
    <property type="nucleotide sequence ID" value="NC_000854.2"/>
</dbReference>
<dbReference type="SMR" id="Q9YB30"/>
<dbReference type="STRING" id="272557.APE_1765.1"/>
<dbReference type="EnsemblBacteria" id="BAA80768">
    <property type="protein sequence ID" value="BAA80768"/>
    <property type="gene ID" value="APE_1765.1"/>
</dbReference>
<dbReference type="GeneID" id="1446227"/>
<dbReference type="KEGG" id="ape:APE_1765.1"/>
<dbReference type="PATRIC" id="fig|272557.25.peg.1186"/>
<dbReference type="eggNOG" id="arCOG00613">
    <property type="taxonomic scope" value="Archaea"/>
</dbReference>
<dbReference type="Proteomes" id="UP000002518">
    <property type="component" value="Chromosome"/>
</dbReference>
<dbReference type="GO" id="GO:0005737">
    <property type="term" value="C:cytoplasm"/>
    <property type="evidence" value="ECO:0007669"/>
    <property type="project" value="UniProtKB-SubCell"/>
</dbReference>
<dbReference type="GO" id="GO:0010181">
    <property type="term" value="F:FMN binding"/>
    <property type="evidence" value="ECO:0007669"/>
    <property type="project" value="UniProtKB-UniRule"/>
</dbReference>
<dbReference type="GO" id="GO:0004452">
    <property type="term" value="F:isopentenyl-diphosphate delta-isomerase activity"/>
    <property type="evidence" value="ECO:0007669"/>
    <property type="project" value="UniProtKB-UniRule"/>
</dbReference>
<dbReference type="GO" id="GO:0000287">
    <property type="term" value="F:magnesium ion binding"/>
    <property type="evidence" value="ECO:0007669"/>
    <property type="project" value="UniProtKB-UniRule"/>
</dbReference>
<dbReference type="GO" id="GO:0070402">
    <property type="term" value="F:NADPH binding"/>
    <property type="evidence" value="ECO:0007669"/>
    <property type="project" value="UniProtKB-UniRule"/>
</dbReference>
<dbReference type="GO" id="GO:0016491">
    <property type="term" value="F:oxidoreductase activity"/>
    <property type="evidence" value="ECO:0007669"/>
    <property type="project" value="InterPro"/>
</dbReference>
<dbReference type="GO" id="GO:0008299">
    <property type="term" value="P:isoprenoid biosynthetic process"/>
    <property type="evidence" value="ECO:0007669"/>
    <property type="project" value="UniProtKB-UniRule"/>
</dbReference>
<dbReference type="CDD" id="cd02811">
    <property type="entry name" value="IDI-2_FMN"/>
    <property type="match status" value="1"/>
</dbReference>
<dbReference type="Gene3D" id="3.20.20.70">
    <property type="entry name" value="Aldolase class I"/>
    <property type="match status" value="1"/>
</dbReference>
<dbReference type="HAMAP" id="MF_00354">
    <property type="entry name" value="Idi_2"/>
    <property type="match status" value="1"/>
</dbReference>
<dbReference type="InterPro" id="IPR013785">
    <property type="entry name" value="Aldolase_TIM"/>
</dbReference>
<dbReference type="InterPro" id="IPR000262">
    <property type="entry name" value="FMN-dep_DH"/>
</dbReference>
<dbReference type="InterPro" id="IPR011179">
    <property type="entry name" value="IPdP_isomerase"/>
</dbReference>
<dbReference type="NCBIfam" id="TIGR02151">
    <property type="entry name" value="IPP_isom_2"/>
    <property type="match status" value="1"/>
</dbReference>
<dbReference type="PANTHER" id="PTHR43665">
    <property type="entry name" value="ISOPENTENYL-DIPHOSPHATE DELTA-ISOMERASE"/>
    <property type="match status" value="1"/>
</dbReference>
<dbReference type="PANTHER" id="PTHR43665:SF1">
    <property type="entry name" value="ISOPENTENYL-DIPHOSPHATE DELTA-ISOMERASE"/>
    <property type="match status" value="1"/>
</dbReference>
<dbReference type="Pfam" id="PF01070">
    <property type="entry name" value="FMN_dh"/>
    <property type="match status" value="1"/>
</dbReference>
<dbReference type="PIRSF" id="PIRSF003314">
    <property type="entry name" value="IPP_isomerase"/>
    <property type="match status" value="1"/>
</dbReference>
<dbReference type="SUPFAM" id="SSF51395">
    <property type="entry name" value="FMN-linked oxidoreductases"/>
    <property type="match status" value="1"/>
</dbReference>
<comment type="function">
    <text evidence="1">Involved in the biosynthesis of isoprenoids. Catalyzes the 1,3-allylic rearrangement of the homoallylic substrate isopentenyl (IPP) to its allylic isomer, dimethylallyl diphosphate (DMAPP).</text>
</comment>
<comment type="catalytic activity">
    <reaction evidence="1">
        <text>isopentenyl diphosphate = dimethylallyl diphosphate</text>
        <dbReference type="Rhea" id="RHEA:23284"/>
        <dbReference type="ChEBI" id="CHEBI:57623"/>
        <dbReference type="ChEBI" id="CHEBI:128769"/>
        <dbReference type="EC" id="5.3.3.2"/>
    </reaction>
</comment>
<comment type="cofactor">
    <cofactor evidence="1">
        <name>FMN</name>
        <dbReference type="ChEBI" id="CHEBI:58210"/>
    </cofactor>
</comment>
<comment type="cofactor">
    <cofactor evidence="1">
        <name>NADPH</name>
        <dbReference type="ChEBI" id="CHEBI:57783"/>
    </cofactor>
</comment>
<comment type="cofactor">
    <cofactor evidence="1">
        <name>Mg(2+)</name>
        <dbReference type="ChEBI" id="CHEBI:18420"/>
    </cofactor>
</comment>
<comment type="subunit">
    <text evidence="1">Homooctamer. Dimer of tetramers.</text>
</comment>
<comment type="subcellular location">
    <subcellularLocation>
        <location evidence="1">Cytoplasm</location>
    </subcellularLocation>
</comment>
<comment type="similarity">
    <text evidence="1">Belongs to the IPP isomerase type 2 family.</text>
</comment>
<proteinExistence type="inferred from homology"/>
<name>IDI2_AERPE</name>
<gene>
    <name evidence="1" type="primary">fni</name>
    <name type="ordered locus">APE_1765.1</name>
</gene>
<feature type="chain" id="PRO_0000134440" description="Isopentenyl-diphosphate delta-isomerase">
    <location>
        <begin position="1"/>
        <end position="375"/>
    </location>
</feature>
<feature type="binding site" evidence="1">
    <location>
        <begin position="8"/>
        <end position="9"/>
    </location>
    <ligand>
        <name>substrate</name>
    </ligand>
</feature>
<feature type="binding site" evidence="1">
    <location>
        <position position="65"/>
    </location>
    <ligand>
        <name>FMN</name>
        <dbReference type="ChEBI" id="CHEBI:58210"/>
    </ligand>
</feature>
<feature type="binding site" evidence="1">
    <location>
        <begin position="66"/>
        <end position="68"/>
    </location>
    <ligand>
        <name>FMN</name>
        <dbReference type="ChEBI" id="CHEBI:58210"/>
    </ligand>
</feature>
<feature type="binding site" evidence="1">
    <location>
        <begin position="96"/>
        <end position="98"/>
    </location>
    <ligand>
        <name>substrate</name>
    </ligand>
</feature>
<feature type="binding site" evidence="1">
    <location>
        <position position="96"/>
    </location>
    <ligand>
        <name>FMN</name>
        <dbReference type="ChEBI" id="CHEBI:58210"/>
    </ligand>
</feature>
<feature type="binding site" evidence="1">
    <location>
        <position position="125"/>
    </location>
    <ligand>
        <name>FMN</name>
        <dbReference type="ChEBI" id="CHEBI:58210"/>
    </ligand>
</feature>
<feature type="binding site" evidence="1">
    <location>
        <position position="160"/>
    </location>
    <ligand>
        <name>substrate</name>
    </ligand>
</feature>
<feature type="binding site" evidence="1">
    <location>
        <position position="161"/>
    </location>
    <ligand>
        <name>Mg(2+)</name>
        <dbReference type="ChEBI" id="CHEBI:18420"/>
    </ligand>
</feature>
<feature type="binding site" evidence="1">
    <location>
        <position position="192"/>
    </location>
    <ligand>
        <name>FMN</name>
        <dbReference type="ChEBI" id="CHEBI:58210"/>
    </ligand>
</feature>
<feature type="binding site" evidence="1">
    <location>
        <position position="222"/>
    </location>
    <ligand>
        <name>FMN</name>
        <dbReference type="ChEBI" id="CHEBI:58210"/>
    </ligand>
</feature>
<feature type="binding site" evidence="1">
    <location>
        <begin position="273"/>
        <end position="275"/>
    </location>
    <ligand>
        <name>FMN</name>
        <dbReference type="ChEBI" id="CHEBI:58210"/>
    </ligand>
</feature>
<feature type="binding site" evidence="1">
    <location>
        <begin position="294"/>
        <end position="295"/>
    </location>
    <ligand>
        <name>FMN</name>
        <dbReference type="ChEBI" id="CHEBI:58210"/>
    </ligand>
</feature>
<keyword id="KW-0963">Cytoplasm</keyword>
<keyword id="KW-0285">Flavoprotein</keyword>
<keyword id="KW-0288">FMN</keyword>
<keyword id="KW-0413">Isomerase</keyword>
<keyword id="KW-0414">Isoprene biosynthesis</keyword>
<keyword id="KW-0460">Magnesium</keyword>
<keyword id="KW-0479">Metal-binding</keyword>
<keyword id="KW-0521">NADP</keyword>
<keyword id="KW-1185">Reference proteome</keyword>
<reference key="1">
    <citation type="journal article" date="1999" name="DNA Res.">
        <title>Complete genome sequence of an aerobic hyper-thermophilic crenarchaeon, Aeropyrum pernix K1.</title>
        <authorList>
            <person name="Kawarabayasi Y."/>
            <person name="Hino Y."/>
            <person name="Horikawa H."/>
            <person name="Yamazaki S."/>
            <person name="Haikawa Y."/>
            <person name="Jin-no K."/>
            <person name="Takahashi M."/>
            <person name="Sekine M."/>
            <person name="Baba S."/>
            <person name="Ankai A."/>
            <person name="Kosugi H."/>
            <person name="Hosoyama A."/>
            <person name="Fukui S."/>
            <person name="Nagai Y."/>
            <person name="Nishijima K."/>
            <person name="Nakazawa H."/>
            <person name="Takamiya M."/>
            <person name="Masuda S."/>
            <person name="Funahashi T."/>
            <person name="Tanaka T."/>
            <person name="Kudoh Y."/>
            <person name="Yamazaki J."/>
            <person name="Kushida N."/>
            <person name="Oguchi A."/>
            <person name="Aoki K."/>
            <person name="Kubota K."/>
            <person name="Nakamura Y."/>
            <person name="Nomura N."/>
            <person name="Sako Y."/>
            <person name="Kikuchi H."/>
        </authorList>
    </citation>
    <scope>NUCLEOTIDE SEQUENCE [LARGE SCALE GENOMIC DNA]</scope>
    <source>
        <strain>ATCC 700893 / DSM 11879 / JCM 9820 / NBRC 100138 / K1</strain>
    </source>
</reference>
<protein>
    <recommendedName>
        <fullName evidence="1">Isopentenyl-diphosphate delta-isomerase</fullName>
        <shortName evidence="1">IPP isomerase</shortName>
        <ecNumber evidence="1">5.3.3.2</ecNumber>
    </recommendedName>
    <alternativeName>
        <fullName evidence="1">Isopentenyl diphosphate:dimethylallyl diphosphate isomerase</fullName>
    </alternativeName>
    <alternativeName>
        <fullName evidence="1">Isopentenyl pyrophosphate isomerase</fullName>
    </alternativeName>
    <alternativeName>
        <fullName evidence="1">Type 2 isopentenyl diphosphate isomerase</fullName>
        <shortName evidence="1">IDI-2</shortName>
    </alternativeName>
</protein>
<organism>
    <name type="scientific">Aeropyrum pernix (strain ATCC 700893 / DSM 11879 / JCM 9820 / NBRC 100138 / K1)</name>
    <dbReference type="NCBI Taxonomy" id="272557"/>
    <lineage>
        <taxon>Archaea</taxon>
        <taxon>Thermoproteota</taxon>
        <taxon>Thermoprotei</taxon>
        <taxon>Desulfurococcales</taxon>
        <taxon>Desulfurococcaceae</taxon>
        <taxon>Aeropyrum</taxon>
    </lineage>
</organism>
<sequence>MTGDTSARKLEHLKMIVSSKVESRESTLLEYVRIVHNPTPEVNLGDVSLEIDFCGGRLRAPLVITGMTGGHPDVEWINRELASVAEELGIAIGVGSQRAAIEDPSLARTFRAAREAAPNAFLIANLGAPQLSLGYSVREVRMAVEMIDADAIAIHLNPGQEAYQPEGDPFYRGVVGKIAEAAEAAGVPVIVKETGNGLSREAVAQLRALGVRCFDVAGLGGTNWIKIEVLRGRKAGSPLEAGPLQDFWGNPTAAALMEARTAAPDAYIIASGGVRNGLDAARAIALGADAAGVALPAIRSLLSGGRQATLKLLKAIEYQLKTAVYMVGETRVRGLWRAPIVVWGRLAEEAEARGIDPRWYTNTLRLEALVYKDVK</sequence>
<evidence type="ECO:0000255" key="1">
    <source>
        <dbReference type="HAMAP-Rule" id="MF_00354"/>
    </source>
</evidence>
<accession>Q9YB30</accession>